<keyword id="KW-0066">ATP synthesis</keyword>
<keyword id="KW-0997">Cell inner membrane</keyword>
<keyword id="KW-1003">Cell membrane</keyword>
<keyword id="KW-0138">CF(0)</keyword>
<keyword id="KW-0375">Hydrogen ion transport</keyword>
<keyword id="KW-0406">Ion transport</keyword>
<keyword id="KW-0472">Membrane</keyword>
<keyword id="KW-0812">Transmembrane</keyword>
<keyword id="KW-1133">Transmembrane helix</keyword>
<keyword id="KW-0813">Transport</keyword>
<comment type="function">
    <text evidence="1">Key component of the proton channel; it plays a direct role in the translocation of protons across the membrane.</text>
</comment>
<comment type="subunit">
    <text evidence="1">F-type ATPases have 2 components, CF(1) - the catalytic core - and CF(0) - the membrane proton channel. CF(1) has five subunits: alpha(3), beta(3), gamma(1), delta(1), epsilon(1). CF(0) has four main subunits: a, b, b' and c.</text>
</comment>
<comment type="subcellular location">
    <subcellularLocation>
        <location evidence="1">Cell inner membrane</location>
        <topology evidence="1">Multi-pass membrane protein</topology>
    </subcellularLocation>
</comment>
<comment type="similarity">
    <text evidence="1">Belongs to the ATPase A chain family.</text>
</comment>
<organism>
    <name type="scientific">Cereibacter sphaeroides (strain ATCC 17029 / ATH 2.4.9)</name>
    <name type="common">Rhodobacter sphaeroides</name>
    <dbReference type="NCBI Taxonomy" id="349101"/>
    <lineage>
        <taxon>Bacteria</taxon>
        <taxon>Pseudomonadati</taxon>
        <taxon>Pseudomonadota</taxon>
        <taxon>Alphaproteobacteria</taxon>
        <taxon>Rhodobacterales</taxon>
        <taxon>Paracoccaceae</taxon>
        <taxon>Cereibacter</taxon>
    </lineage>
</organism>
<name>ATP6_CERS1</name>
<reference key="1">
    <citation type="submission" date="2007-02" db="EMBL/GenBank/DDBJ databases">
        <title>Complete sequence of chromosome 1 of Rhodobacter sphaeroides ATCC 17029.</title>
        <authorList>
            <person name="Copeland A."/>
            <person name="Lucas S."/>
            <person name="Lapidus A."/>
            <person name="Barry K."/>
            <person name="Detter J.C."/>
            <person name="Glavina del Rio T."/>
            <person name="Hammon N."/>
            <person name="Israni S."/>
            <person name="Dalin E."/>
            <person name="Tice H."/>
            <person name="Pitluck S."/>
            <person name="Kiss H."/>
            <person name="Brettin T."/>
            <person name="Bruce D."/>
            <person name="Han C."/>
            <person name="Tapia R."/>
            <person name="Gilna P."/>
            <person name="Schmutz J."/>
            <person name="Larimer F."/>
            <person name="Land M."/>
            <person name="Hauser L."/>
            <person name="Kyrpides N."/>
            <person name="Mikhailova N."/>
            <person name="Richardson P."/>
            <person name="Mackenzie C."/>
            <person name="Choudhary M."/>
            <person name="Donohue T.J."/>
            <person name="Kaplan S."/>
        </authorList>
    </citation>
    <scope>NUCLEOTIDE SEQUENCE [LARGE SCALE GENOMIC DNA]</scope>
    <source>
        <strain>ATCC 17029 / ATH 2.4.9</strain>
    </source>
</reference>
<evidence type="ECO:0000255" key="1">
    <source>
        <dbReference type="HAMAP-Rule" id="MF_01393"/>
    </source>
</evidence>
<dbReference type="EMBL" id="CP000577">
    <property type="protein sequence ID" value="ABN77801.1"/>
    <property type="molecule type" value="Genomic_DNA"/>
</dbReference>
<dbReference type="RefSeq" id="WP_002721375.1">
    <property type="nucleotide sequence ID" value="NC_009049.1"/>
</dbReference>
<dbReference type="SMR" id="A3PN85"/>
<dbReference type="GeneID" id="3720948"/>
<dbReference type="KEGG" id="rsh:Rsph17029_2699"/>
<dbReference type="HOGENOM" id="CLU_041018_0_2_5"/>
<dbReference type="GO" id="GO:0005886">
    <property type="term" value="C:plasma membrane"/>
    <property type="evidence" value="ECO:0007669"/>
    <property type="project" value="UniProtKB-SubCell"/>
</dbReference>
<dbReference type="GO" id="GO:0045259">
    <property type="term" value="C:proton-transporting ATP synthase complex"/>
    <property type="evidence" value="ECO:0007669"/>
    <property type="project" value="UniProtKB-KW"/>
</dbReference>
<dbReference type="GO" id="GO:0046933">
    <property type="term" value="F:proton-transporting ATP synthase activity, rotational mechanism"/>
    <property type="evidence" value="ECO:0007669"/>
    <property type="project" value="UniProtKB-UniRule"/>
</dbReference>
<dbReference type="CDD" id="cd00310">
    <property type="entry name" value="ATP-synt_Fo_a_6"/>
    <property type="match status" value="1"/>
</dbReference>
<dbReference type="Gene3D" id="1.20.120.220">
    <property type="entry name" value="ATP synthase, F0 complex, subunit A"/>
    <property type="match status" value="1"/>
</dbReference>
<dbReference type="HAMAP" id="MF_01393">
    <property type="entry name" value="ATP_synth_a_bact"/>
    <property type="match status" value="1"/>
</dbReference>
<dbReference type="InterPro" id="IPR000568">
    <property type="entry name" value="ATP_synth_F0_asu"/>
</dbReference>
<dbReference type="InterPro" id="IPR023011">
    <property type="entry name" value="ATP_synth_F0_asu_AS"/>
</dbReference>
<dbReference type="InterPro" id="IPR045083">
    <property type="entry name" value="ATP_synth_F0_asu_bact/mt"/>
</dbReference>
<dbReference type="InterPro" id="IPR035908">
    <property type="entry name" value="F0_ATP_A_sf"/>
</dbReference>
<dbReference type="NCBIfam" id="TIGR01131">
    <property type="entry name" value="ATP_synt_6_or_A"/>
    <property type="match status" value="1"/>
</dbReference>
<dbReference type="NCBIfam" id="NF004482">
    <property type="entry name" value="PRK05815.2-4"/>
    <property type="match status" value="1"/>
</dbReference>
<dbReference type="PANTHER" id="PTHR11410">
    <property type="entry name" value="ATP SYNTHASE SUBUNIT A"/>
    <property type="match status" value="1"/>
</dbReference>
<dbReference type="PANTHER" id="PTHR11410:SF0">
    <property type="entry name" value="ATP SYNTHASE SUBUNIT A"/>
    <property type="match status" value="1"/>
</dbReference>
<dbReference type="Pfam" id="PF00119">
    <property type="entry name" value="ATP-synt_A"/>
    <property type="match status" value="1"/>
</dbReference>
<dbReference type="PRINTS" id="PR00123">
    <property type="entry name" value="ATPASEA"/>
</dbReference>
<dbReference type="SUPFAM" id="SSF81336">
    <property type="entry name" value="F1F0 ATP synthase subunit A"/>
    <property type="match status" value="1"/>
</dbReference>
<dbReference type="PROSITE" id="PS00449">
    <property type="entry name" value="ATPASE_A"/>
    <property type="match status" value="1"/>
</dbReference>
<accession>A3PN85</accession>
<protein>
    <recommendedName>
        <fullName evidence="1">ATP synthase subunit a</fullName>
    </recommendedName>
    <alternativeName>
        <fullName evidence="1">ATP synthase F0 sector subunit a</fullName>
    </alternativeName>
    <alternativeName>
        <fullName evidence="1">F-ATPase subunit 6</fullName>
    </alternativeName>
</protein>
<sequence>METEVEHTGLAIHPMDQFIVKKLFCHTESTAPMNECTTNIHWYDITNVTMWMAIAVLVIAAILVLGTRRRAIVPSRSQSVAELLYGFIHNMVEEVTGHEGVKYFPYVMTLFLFVLCGNVLGLLPLSFTTTSHMAVTVPLALMVFVGVTALGFMKNGPGFLKMFWVTSAPLAIRPVLAVIEVISYFVRPVSHSIRLAGNMMAGHAVIKVIAGFASIVVVSPVVVGAVTAIYALELLVAVVQAYVFTILTCVYLRDAVGDAHH</sequence>
<gene>
    <name evidence="1" type="primary">atpB</name>
    <name type="ordered locus">Rsph17029_2699</name>
</gene>
<feature type="chain" id="PRO_0000362415" description="ATP synthase subunit a">
    <location>
        <begin position="1"/>
        <end position="261"/>
    </location>
</feature>
<feature type="transmembrane region" description="Helical" evidence="1">
    <location>
        <begin position="45"/>
        <end position="65"/>
    </location>
</feature>
<feature type="transmembrane region" description="Helical" evidence="1">
    <location>
        <begin position="107"/>
        <end position="127"/>
    </location>
</feature>
<feature type="transmembrane region" description="Helical" evidence="1">
    <location>
        <begin position="133"/>
        <end position="153"/>
    </location>
</feature>
<feature type="transmembrane region" description="Helical" evidence="1">
    <location>
        <begin position="162"/>
        <end position="182"/>
    </location>
</feature>
<feature type="transmembrane region" description="Helical" evidence="1">
    <location>
        <begin position="209"/>
        <end position="229"/>
    </location>
</feature>
<feature type="transmembrane region" description="Helical" evidence="1">
    <location>
        <begin position="232"/>
        <end position="252"/>
    </location>
</feature>
<proteinExistence type="inferred from homology"/>